<sequence>MPSRWPGVAGPPALARTEGGEGSAGHSYPQNSKGTGEQHKADRIKEGHRVYAHIAKLQELWKTTQIQTIHIPKSMTDASFLKHPELTLGQKRYLCSVAKICNSSYLRTLMKRQYMHIFHHGSQKTGVLTHHRGHMSSRYSQKQHSPCTAWRHHLEREDSLSIAAGAPEMIIHSLWRPLRHKEGLKIGYASKTRCKSLKIFRRPGRLFLLPVPSNDSQSCPSEETQEEDLLNKCMQSMSIQEQGPAHASLTV</sequence>
<protein>
    <recommendedName>
        <fullName>Protein FAM216A</fullName>
    </recommendedName>
</protein>
<keyword id="KW-1185">Reference proteome</keyword>
<dbReference type="EMBL" id="AK005211">
    <property type="protein sequence ID" value="BAB23885.1"/>
    <property type="molecule type" value="mRNA"/>
</dbReference>
<dbReference type="EMBL" id="AK150218">
    <property type="protein sequence ID" value="BAE29387.1"/>
    <property type="molecule type" value="mRNA"/>
</dbReference>
<dbReference type="EMBL" id="BC019498">
    <property type="protein sequence ID" value="AAH19498.1"/>
    <property type="molecule type" value="mRNA"/>
</dbReference>
<dbReference type="EMBL" id="BC057658">
    <property type="protein sequence ID" value="AAH57658.1"/>
    <property type="molecule type" value="mRNA"/>
</dbReference>
<dbReference type="EMBL" id="BC061033">
    <property type="protein sequence ID" value="AAH61033.1"/>
    <property type="molecule type" value="mRNA"/>
</dbReference>
<dbReference type="CCDS" id="CCDS39257.1"/>
<dbReference type="RefSeq" id="NP_081159.1">
    <property type="nucleotide sequence ID" value="NM_026883.4"/>
</dbReference>
<dbReference type="FunCoup" id="Q9DB54">
    <property type="interactions" value="88"/>
</dbReference>
<dbReference type="IntAct" id="Q9DB54">
    <property type="interactions" value="5"/>
</dbReference>
<dbReference type="STRING" id="10090.ENSMUSP00000031419"/>
<dbReference type="PhosphoSitePlus" id="Q9DB54"/>
<dbReference type="PaxDb" id="10090-ENSMUSP00000031419"/>
<dbReference type="ProteomicsDB" id="271533"/>
<dbReference type="Pumba" id="Q9DB54"/>
<dbReference type="Antibodypedia" id="31011">
    <property type="antibodies" value="106 antibodies from 19 providers"/>
</dbReference>
<dbReference type="Ensembl" id="ENSMUST00000031419.6">
    <property type="protein sequence ID" value="ENSMUSP00000031419.6"/>
    <property type="gene ID" value="ENSMUSG00000029463.6"/>
</dbReference>
<dbReference type="GeneID" id="68948"/>
<dbReference type="KEGG" id="mmu:68948"/>
<dbReference type="UCSC" id="uc008zld.1">
    <property type="organism name" value="mouse"/>
</dbReference>
<dbReference type="AGR" id="MGI:1916198"/>
<dbReference type="CTD" id="29902"/>
<dbReference type="MGI" id="MGI:1916198">
    <property type="gene designation" value="Fam216a"/>
</dbReference>
<dbReference type="VEuPathDB" id="HostDB:ENSMUSG00000029463"/>
<dbReference type="eggNOG" id="ENOG502SC0D">
    <property type="taxonomic scope" value="Eukaryota"/>
</dbReference>
<dbReference type="GeneTree" id="ENSGT00940000154512"/>
<dbReference type="HOGENOM" id="CLU_096833_0_0_1"/>
<dbReference type="InParanoid" id="Q9DB54"/>
<dbReference type="OMA" id="KPGRLFM"/>
<dbReference type="OrthoDB" id="5980156at2759"/>
<dbReference type="PhylomeDB" id="Q9DB54"/>
<dbReference type="TreeFam" id="TF337546"/>
<dbReference type="BioGRID-ORCS" id="68948">
    <property type="hits" value="4 hits in 75 CRISPR screens"/>
</dbReference>
<dbReference type="ChiTaRS" id="Fam216a">
    <property type="organism name" value="mouse"/>
</dbReference>
<dbReference type="PRO" id="PR:Q9DB54"/>
<dbReference type="Proteomes" id="UP000000589">
    <property type="component" value="Chromosome 5"/>
</dbReference>
<dbReference type="RNAct" id="Q9DB54">
    <property type="molecule type" value="protein"/>
</dbReference>
<dbReference type="Bgee" id="ENSMUSG00000029463">
    <property type="expression patterns" value="Expressed in spermatocyte and 254 other cell types or tissues"/>
</dbReference>
<dbReference type="InterPro" id="IPR029373">
    <property type="entry name" value="FAM216"/>
</dbReference>
<dbReference type="PANTHER" id="PTHR16476">
    <property type="entry name" value="FAMILY WITH SEQUENCE SIMILARITY 216 MEMBER A"/>
    <property type="match status" value="1"/>
</dbReference>
<dbReference type="PANTHER" id="PTHR16476:SF1">
    <property type="entry name" value="PROTEIN FAM216A"/>
    <property type="match status" value="1"/>
</dbReference>
<dbReference type="Pfam" id="PF15107">
    <property type="entry name" value="FAM216B"/>
    <property type="match status" value="1"/>
</dbReference>
<name>F216A_MOUSE</name>
<evidence type="ECO:0000256" key="1">
    <source>
        <dbReference type="SAM" id="MobiDB-lite"/>
    </source>
</evidence>
<evidence type="ECO:0000305" key="2"/>
<organism>
    <name type="scientific">Mus musculus</name>
    <name type="common">Mouse</name>
    <dbReference type="NCBI Taxonomy" id="10090"/>
    <lineage>
        <taxon>Eukaryota</taxon>
        <taxon>Metazoa</taxon>
        <taxon>Chordata</taxon>
        <taxon>Craniata</taxon>
        <taxon>Vertebrata</taxon>
        <taxon>Euteleostomi</taxon>
        <taxon>Mammalia</taxon>
        <taxon>Eutheria</taxon>
        <taxon>Euarchontoglires</taxon>
        <taxon>Glires</taxon>
        <taxon>Rodentia</taxon>
        <taxon>Myomorpha</taxon>
        <taxon>Muroidea</taxon>
        <taxon>Muridae</taxon>
        <taxon>Murinae</taxon>
        <taxon>Mus</taxon>
        <taxon>Mus</taxon>
    </lineage>
</organism>
<comment type="similarity">
    <text evidence="2">Belongs to the FAM216 family.</text>
</comment>
<reference key="1">
    <citation type="journal article" date="2005" name="Science">
        <title>The transcriptional landscape of the mammalian genome.</title>
        <authorList>
            <person name="Carninci P."/>
            <person name="Kasukawa T."/>
            <person name="Katayama S."/>
            <person name="Gough J."/>
            <person name="Frith M.C."/>
            <person name="Maeda N."/>
            <person name="Oyama R."/>
            <person name="Ravasi T."/>
            <person name="Lenhard B."/>
            <person name="Wells C."/>
            <person name="Kodzius R."/>
            <person name="Shimokawa K."/>
            <person name="Bajic V.B."/>
            <person name="Brenner S.E."/>
            <person name="Batalov S."/>
            <person name="Forrest A.R."/>
            <person name="Zavolan M."/>
            <person name="Davis M.J."/>
            <person name="Wilming L.G."/>
            <person name="Aidinis V."/>
            <person name="Allen J.E."/>
            <person name="Ambesi-Impiombato A."/>
            <person name="Apweiler R."/>
            <person name="Aturaliya R.N."/>
            <person name="Bailey T.L."/>
            <person name="Bansal M."/>
            <person name="Baxter L."/>
            <person name="Beisel K.W."/>
            <person name="Bersano T."/>
            <person name="Bono H."/>
            <person name="Chalk A.M."/>
            <person name="Chiu K.P."/>
            <person name="Choudhary V."/>
            <person name="Christoffels A."/>
            <person name="Clutterbuck D.R."/>
            <person name="Crowe M.L."/>
            <person name="Dalla E."/>
            <person name="Dalrymple B.P."/>
            <person name="de Bono B."/>
            <person name="Della Gatta G."/>
            <person name="di Bernardo D."/>
            <person name="Down T."/>
            <person name="Engstrom P."/>
            <person name="Fagiolini M."/>
            <person name="Faulkner G."/>
            <person name="Fletcher C.F."/>
            <person name="Fukushima T."/>
            <person name="Furuno M."/>
            <person name="Futaki S."/>
            <person name="Gariboldi M."/>
            <person name="Georgii-Hemming P."/>
            <person name="Gingeras T.R."/>
            <person name="Gojobori T."/>
            <person name="Green R.E."/>
            <person name="Gustincich S."/>
            <person name="Harbers M."/>
            <person name="Hayashi Y."/>
            <person name="Hensch T.K."/>
            <person name="Hirokawa N."/>
            <person name="Hill D."/>
            <person name="Huminiecki L."/>
            <person name="Iacono M."/>
            <person name="Ikeo K."/>
            <person name="Iwama A."/>
            <person name="Ishikawa T."/>
            <person name="Jakt M."/>
            <person name="Kanapin A."/>
            <person name="Katoh M."/>
            <person name="Kawasawa Y."/>
            <person name="Kelso J."/>
            <person name="Kitamura H."/>
            <person name="Kitano H."/>
            <person name="Kollias G."/>
            <person name="Krishnan S.P."/>
            <person name="Kruger A."/>
            <person name="Kummerfeld S.K."/>
            <person name="Kurochkin I.V."/>
            <person name="Lareau L.F."/>
            <person name="Lazarevic D."/>
            <person name="Lipovich L."/>
            <person name="Liu J."/>
            <person name="Liuni S."/>
            <person name="McWilliam S."/>
            <person name="Madan Babu M."/>
            <person name="Madera M."/>
            <person name="Marchionni L."/>
            <person name="Matsuda H."/>
            <person name="Matsuzawa S."/>
            <person name="Miki H."/>
            <person name="Mignone F."/>
            <person name="Miyake S."/>
            <person name="Morris K."/>
            <person name="Mottagui-Tabar S."/>
            <person name="Mulder N."/>
            <person name="Nakano N."/>
            <person name="Nakauchi H."/>
            <person name="Ng P."/>
            <person name="Nilsson R."/>
            <person name="Nishiguchi S."/>
            <person name="Nishikawa S."/>
            <person name="Nori F."/>
            <person name="Ohara O."/>
            <person name="Okazaki Y."/>
            <person name="Orlando V."/>
            <person name="Pang K.C."/>
            <person name="Pavan W.J."/>
            <person name="Pavesi G."/>
            <person name="Pesole G."/>
            <person name="Petrovsky N."/>
            <person name="Piazza S."/>
            <person name="Reed J."/>
            <person name="Reid J.F."/>
            <person name="Ring B.Z."/>
            <person name="Ringwald M."/>
            <person name="Rost B."/>
            <person name="Ruan Y."/>
            <person name="Salzberg S.L."/>
            <person name="Sandelin A."/>
            <person name="Schneider C."/>
            <person name="Schoenbach C."/>
            <person name="Sekiguchi K."/>
            <person name="Semple C.A."/>
            <person name="Seno S."/>
            <person name="Sessa L."/>
            <person name="Sheng Y."/>
            <person name="Shibata Y."/>
            <person name="Shimada H."/>
            <person name="Shimada K."/>
            <person name="Silva D."/>
            <person name="Sinclair B."/>
            <person name="Sperling S."/>
            <person name="Stupka E."/>
            <person name="Sugiura K."/>
            <person name="Sultana R."/>
            <person name="Takenaka Y."/>
            <person name="Taki K."/>
            <person name="Tammoja K."/>
            <person name="Tan S.L."/>
            <person name="Tang S."/>
            <person name="Taylor M.S."/>
            <person name="Tegner J."/>
            <person name="Teichmann S.A."/>
            <person name="Ueda H.R."/>
            <person name="van Nimwegen E."/>
            <person name="Verardo R."/>
            <person name="Wei C.L."/>
            <person name="Yagi K."/>
            <person name="Yamanishi H."/>
            <person name="Zabarovsky E."/>
            <person name="Zhu S."/>
            <person name="Zimmer A."/>
            <person name="Hide W."/>
            <person name="Bult C."/>
            <person name="Grimmond S.M."/>
            <person name="Teasdale R.D."/>
            <person name="Liu E.T."/>
            <person name="Brusic V."/>
            <person name="Quackenbush J."/>
            <person name="Wahlestedt C."/>
            <person name="Mattick J.S."/>
            <person name="Hume D.A."/>
            <person name="Kai C."/>
            <person name="Sasaki D."/>
            <person name="Tomaru Y."/>
            <person name="Fukuda S."/>
            <person name="Kanamori-Katayama M."/>
            <person name="Suzuki M."/>
            <person name="Aoki J."/>
            <person name="Arakawa T."/>
            <person name="Iida J."/>
            <person name="Imamura K."/>
            <person name="Itoh M."/>
            <person name="Kato T."/>
            <person name="Kawaji H."/>
            <person name="Kawagashira N."/>
            <person name="Kawashima T."/>
            <person name="Kojima M."/>
            <person name="Kondo S."/>
            <person name="Konno H."/>
            <person name="Nakano K."/>
            <person name="Ninomiya N."/>
            <person name="Nishio T."/>
            <person name="Okada M."/>
            <person name="Plessy C."/>
            <person name="Shibata K."/>
            <person name="Shiraki T."/>
            <person name="Suzuki S."/>
            <person name="Tagami M."/>
            <person name="Waki K."/>
            <person name="Watahiki A."/>
            <person name="Okamura-Oho Y."/>
            <person name="Suzuki H."/>
            <person name="Kawai J."/>
            <person name="Hayashizaki Y."/>
        </authorList>
    </citation>
    <scope>NUCLEOTIDE SEQUENCE [LARGE SCALE MRNA]</scope>
    <source>
        <strain>C57BL/6J</strain>
        <tissue>Bone marrow</tissue>
        <tissue>Cerebellum</tissue>
    </source>
</reference>
<reference key="2">
    <citation type="journal article" date="2004" name="Genome Res.">
        <title>The status, quality, and expansion of the NIH full-length cDNA project: the Mammalian Gene Collection (MGC).</title>
        <authorList>
            <consortium name="The MGC Project Team"/>
        </authorList>
    </citation>
    <scope>NUCLEOTIDE SEQUENCE [LARGE SCALE MRNA]</scope>
    <source>
        <strain>129</strain>
        <strain>FVB/N</strain>
        <tissue>Brain</tissue>
        <tissue>Mammary tumor</tissue>
    </source>
</reference>
<gene>
    <name type="primary">Fam216a</name>
</gene>
<feature type="chain" id="PRO_0000288862" description="Protein FAM216A">
    <location>
        <begin position="1"/>
        <end position="251"/>
    </location>
</feature>
<feature type="region of interest" description="Disordered" evidence="1">
    <location>
        <begin position="1"/>
        <end position="41"/>
    </location>
</feature>
<feature type="sequence conflict" description="In Ref. 2; AAH57658." evidence="2" ref="2">
    <original>S</original>
    <variation>P</variation>
    <location>
        <position position="103"/>
    </location>
</feature>
<proteinExistence type="evidence at transcript level"/>
<accession>Q9DB54</accession>
<accession>Q3UD74</accession>
<accession>Q6PFA4</accession>